<comment type="sequence caution" evidence="2">
    <conflict type="frameshift">
        <sequence resource="EMBL-CDS" id="BAA19235"/>
    </conflict>
</comment>
<keyword id="KW-0597">Phosphoprotein</keyword>
<keyword id="KW-1185">Reference proteome</keyword>
<dbReference type="EMBL" id="CU329671">
    <property type="protein sequence ID" value="CAB58401.2"/>
    <property type="molecule type" value="Genomic_DNA"/>
</dbReference>
<dbReference type="EMBL" id="AB001290">
    <property type="protein sequence ID" value="BAA19235.1"/>
    <property type="status" value="ALT_FRAME"/>
    <property type="molecule type" value="mRNA"/>
</dbReference>
<dbReference type="PIR" id="T40416">
    <property type="entry name" value="T40416"/>
</dbReference>
<dbReference type="RefSeq" id="NP_595475.2">
    <property type="nucleotide sequence ID" value="NM_001021386.3"/>
</dbReference>
<dbReference type="BioGRID" id="277591">
    <property type="interactions" value="3"/>
</dbReference>
<dbReference type="FunCoup" id="Q9USS8">
    <property type="interactions" value="3"/>
</dbReference>
<dbReference type="STRING" id="284812.Q9USS8"/>
<dbReference type="iPTMnet" id="Q9USS8"/>
<dbReference type="PaxDb" id="4896-SPBC4.02c.1"/>
<dbReference type="EnsemblFungi" id="SPBC4.02c.1">
    <property type="protein sequence ID" value="SPBC4.02c.1:pep"/>
    <property type="gene ID" value="SPBC4.02c"/>
</dbReference>
<dbReference type="KEGG" id="spo:2541076"/>
<dbReference type="PomBase" id="SPBC4.02c"/>
<dbReference type="VEuPathDB" id="FungiDB:SPBC4.02c"/>
<dbReference type="eggNOG" id="ENOG502S30I">
    <property type="taxonomic scope" value="Eukaryota"/>
</dbReference>
<dbReference type="HOGENOM" id="CLU_022771_1_0_1"/>
<dbReference type="InParanoid" id="Q9USS8"/>
<dbReference type="OMA" id="YEDRPSH"/>
<dbReference type="PhylomeDB" id="Q9USS8"/>
<dbReference type="PRO" id="PR:Q9USS8"/>
<dbReference type="Proteomes" id="UP000002485">
    <property type="component" value="Chromosome II"/>
</dbReference>
<dbReference type="GO" id="GO:0031428">
    <property type="term" value="C:box C/D methylation guide snoRNP complex"/>
    <property type="evidence" value="ECO:0000318"/>
    <property type="project" value="GO_Central"/>
</dbReference>
<dbReference type="GO" id="GO:0005634">
    <property type="term" value="C:nucleus"/>
    <property type="evidence" value="ECO:0007005"/>
    <property type="project" value="PomBase"/>
</dbReference>
<dbReference type="GO" id="GO:0032040">
    <property type="term" value="C:small-subunit processome"/>
    <property type="evidence" value="ECO:0000318"/>
    <property type="project" value="GO_Central"/>
</dbReference>
<dbReference type="GO" id="GO:1990259">
    <property type="term" value="F:histone H2AQ104 methyltransferase activity"/>
    <property type="evidence" value="ECO:0000318"/>
    <property type="project" value="GO_Central"/>
</dbReference>
<dbReference type="GO" id="GO:0003723">
    <property type="term" value="F:RNA binding"/>
    <property type="evidence" value="ECO:0000318"/>
    <property type="project" value="GO_Central"/>
</dbReference>
<dbReference type="GO" id="GO:0008649">
    <property type="term" value="F:rRNA methyltransferase activity"/>
    <property type="evidence" value="ECO:0000318"/>
    <property type="project" value="GO_Central"/>
</dbReference>
<dbReference type="GO" id="GO:0000494">
    <property type="term" value="P:box C/D sno(s)RNA 3'-end processing"/>
    <property type="evidence" value="ECO:0000318"/>
    <property type="project" value="GO_Central"/>
</dbReference>
<dbReference type="GO" id="GO:0031167">
    <property type="term" value="P:rRNA methylation"/>
    <property type="evidence" value="ECO:0000318"/>
    <property type="project" value="GO_Central"/>
</dbReference>
<dbReference type="GO" id="GO:0000452">
    <property type="term" value="P:snoRNA guided rRNA 2'-O-methylation"/>
    <property type="evidence" value="ECO:0000305"/>
    <property type="project" value="PomBase"/>
</dbReference>
<dbReference type="InterPro" id="IPR018812">
    <property type="entry name" value="SAK_HAD"/>
</dbReference>
<dbReference type="PANTHER" id="PTHR10335:SF23">
    <property type="entry name" value="OB FOLD-CONTAINING PROTEIN, NUCLEIC ACID BINDING"/>
    <property type="match status" value="1"/>
</dbReference>
<dbReference type="PANTHER" id="PTHR10335">
    <property type="entry name" value="RRNA 2-O-METHYLTRANSFERASE FIBRILLARIN"/>
    <property type="match status" value="1"/>
</dbReference>
<dbReference type="Pfam" id="PF10307">
    <property type="entry name" value="HAD_SAK_1"/>
    <property type="match status" value="1"/>
</dbReference>
<accession>Q9USS8</accession>
<accession>P79059</accession>
<reference key="1">
    <citation type="journal article" date="2002" name="Nature">
        <title>The genome sequence of Schizosaccharomyces pombe.</title>
        <authorList>
            <person name="Wood V."/>
            <person name="Gwilliam R."/>
            <person name="Rajandream M.A."/>
            <person name="Lyne M.H."/>
            <person name="Lyne R."/>
            <person name="Stewart A."/>
            <person name="Sgouros J.G."/>
            <person name="Peat N."/>
            <person name="Hayles J."/>
            <person name="Baker S.G."/>
            <person name="Basham D."/>
            <person name="Bowman S."/>
            <person name="Brooks K."/>
            <person name="Brown D."/>
            <person name="Brown S."/>
            <person name="Chillingworth T."/>
            <person name="Churcher C.M."/>
            <person name="Collins M."/>
            <person name="Connor R."/>
            <person name="Cronin A."/>
            <person name="Davis P."/>
            <person name="Feltwell T."/>
            <person name="Fraser A."/>
            <person name="Gentles S."/>
            <person name="Goble A."/>
            <person name="Hamlin N."/>
            <person name="Harris D.E."/>
            <person name="Hidalgo J."/>
            <person name="Hodgson G."/>
            <person name="Holroyd S."/>
            <person name="Hornsby T."/>
            <person name="Howarth S."/>
            <person name="Huckle E.J."/>
            <person name="Hunt S."/>
            <person name="Jagels K."/>
            <person name="James K.D."/>
            <person name="Jones L."/>
            <person name="Jones M."/>
            <person name="Leather S."/>
            <person name="McDonald S."/>
            <person name="McLean J."/>
            <person name="Mooney P."/>
            <person name="Moule S."/>
            <person name="Mungall K.L."/>
            <person name="Murphy L.D."/>
            <person name="Niblett D."/>
            <person name="Odell C."/>
            <person name="Oliver K."/>
            <person name="O'Neil S."/>
            <person name="Pearson D."/>
            <person name="Quail M.A."/>
            <person name="Rabbinowitsch E."/>
            <person name="Rutherford K.M."/>
            <person name="Rutter S."/>
            <person name="Saunders D."/>
            <person name="Seeger K."/>
            <person name="Sharp S."/>
            <person name="Skelton J."/>
            <person name="Simmonds M.N."/>
            <person name="Squares R."/>
            <person name="Squares S."/>
            <person name="Stevens K."/>
            <person name="Taylor K."/>
            <person name="Taylor R.G."/>
            <person name="Tivey A."/>
            <person name="Walsh S.V."/>
            <person name="Warren T."/>
            <person name="Whitehead S."/>
            <person name="Woodward J.R."/>
            <person name="Volckaert G."/>
            <person name="Aert R."/>
            <person name="Robben J."/>
            <person name="Grymonprez B."/>
            <person name="Weltjens I."/>
            <person name="Vanstreels E."/>
            <person name="Rieger M."/>
            <person name="Schaefer M."/>
            <person name="Mueller-Auer S."/>
            <person name="Gabel C."/>
            <person name="Fuchs M."/>
            <person name="Duesterhoeft A."/>
            <person name="Fritzc C."/>
            <person name="Holzer E."/>
            <person name="Moestl D."/>
            <person name="Hilbert H."/>
            <person name="Borzym K."/>
            <person name="Langer I."/>
            <person name="Beck A."/>
            <person name="Lehrach H."/>
            <person name="Reinhardt R."/>
            <person name="Pohl T.M."/>
            <person name="Eger P."/>
            <person name="Zimmermann W."/>
            <person name="Wedler H."/>
            <person name="Wambutt R."/>
            <person name="Purnelle B."/>
            <person name="Goffeau A."/>
            <person name="Cadieu E."/>
            <person name="Dreano S."/>
            <person name="Gloux S."/>
            <person name="Lelaure V."/>
            <person name="Mottier S."/>
            <person name="Galibert F."/>
            <person name="Aves S.J."/>
            <person name="Xiang Z."/>
            <person name="Hunt C."/>
            <person name="Moore K."/>
            <person name="Hurst S.M."/>
            <person name="Lucas M."/>
            <person name="Rochet M."/>
            <person name="Gaillardin C."/>
            <person name="Tallada V.A."/>
            <person name="Garzon A."/>
            <person name="Thode G."/>
            <person name="Daga R.R."/>
            <person name="Cruzado L."/>
            <person name="Jimenez J."/>
            <person name="Sanchez M."/>
            <person name="del Rey F."/>
            <person name="Benito J."/>
            <person name="Dominguez A."/>
            <person name="Revuelta J.L."/>
            <person name="Moreno S."/>
            <person name="Armstrong J."/>
            <person name="Forsburg S.L."/>
            <person name="Cerutti L."/>
            <person name="Lowe T."/>
            <person name="McCombie W.R."/>
            <person name="Paulsen I."/>
            <person name="Potashkin J."/>
            <person name="Shpakovski G.V."/>
            <person name="Ussery D."/>
            <person name="Barrell B.G."/>
            <person name="Nurse P."/>
        </authorList>
    </citation>
    <scope>NUCLEOTIDE SEQUENCE [LARGE SCALE GENOMIC DNA]</scope>
    <source>
        <strain>972 / ATCC 24843</strain>
    </source>
</reference>
<reference key="2">
    <citation type="submission" date="1997-02" db="EMBL/GenBank/DDBJ databases">
        <title>S.pombe cDNA.</title>
        <authorList>
            <person name="Kawamukai M."/>
        </authorList>
    </citation>
    <scope>NUCLEOTIDE SEQUENCE [MRNA] OF 240-437</scope>
</reference>
<reference key="3">
    <citation type="journal article" date="2008" name="J. Proteome Res.">
        <title>Phosphoproteome analysis of fission yeast.</title>
        <authorList>
            <person name="Wilson-Grady J.T."/>
            <person name="Villen J."/>
            <person name="Gygi S.P."/>
        </authorList>
    </citation>
    <scope>PHOSPHORYLATION [LARGE SCALE ANALYSIS] AT SER-290; SER-293; THR-296; SER-418 AND SER-428</scope>
    <scope>IDENTIFICATION BY MASS SPECTROMETRY</scope>
</reference>
<name>YNB2_SCHPO</name>
<gene>
    <name type="ORF">SPBC4.02c</name>
</gene>
<sequence length="437" mass="50010">MSLNVDIGLGTYDFSKWGYIDVHKIKEVHIYDFDNTLFQTPLPNANIWSNQAIRILMAFNILANGGWFFDPHVLAATGDGVEVEEKRAWEGWWNEKIVSQARESIRRPDVLAVLLTGRNEGFRGIVEKIIASKGLDFQGVVFKLQAPDGFWPQTLNFKLWFFNEVYRHFLYINSTRIYEDRPSHIEAFSAWLTERKKKNKNADFEIIAVAEPPKYLKFKVEIALVRGMLTAHNLKAPSLKLPLYKFVKNVIATVVTVPVAELHHIRNAFFNIPIAEIMESVSANSSRRNSHDSNSTIICEPEYPPDTSFNSSPGRLWIVTAIGRYRDEYWTVRAEAAEGYDCEKIHEIDVADIPSLYGTILYVSMSTGIVKSEIGDIGAQQWKTLAPSERWILRTNIRKECTYDIRYKRPYVSSLKYSDDDLTAGRASPMTGPTKRK</sequence>
<protein>
    <recommendedName>
        <fullName>Uncharacterized protein C4.02c</fullName>
    </recommendedName>
</protein>
<organism>
    <name type="scientific">Schizosaccharomyces pombe (strain 972 / ATCC 24843)</name>
    <name type="common">Fission yeast</name>
    <dbReference type="NCBI Taxonomy" id="284812"/>
    <lineage>
        <taxon>Eukaryota</taxon>
        <taxon>Fungi</taxon>
        <taxon>Dikarya</taxon>
        <taxon>Ascomycota</taxon>
        <taxon>Taphrinomycotina</taxon>
        <taxon>Schizosaccharomycetes</taxon>
        <taxon>Schizosaccharomycetales</taxon>
        <taxon>Schizosaccharomycetaceae</taxon>
        <taxon>Schizosaccharomyces</taxon>
    </lineage>
</organism>
<proteinExistence type="evidence at protein level"/>
<feature type="chain" id="PRO_0000116851" description="Uncharacterized protein C4.02c">
    <location>
        <begin position="1"/>
        <end position="437"/>
    </location>
</feature>
<feature type="modified residue" description="Phosphoserine" evidence="1">
    <location>
        <position position="290"/>
    </location>
</feature>
<feature type="modified residue" description="Phosphoserine" evidence="1">
    <location>
        <position position="293"/>
    </location>
</feature>
<feature type="modified residue" description="Phosphothreonine" evidence="1">
    <location>
        <position position="296"/>
    </location>
</feature>
<feature type="modified residue" description="Phosphoserine" evidence="1">
    <location>
        <position position="418"/>
    </location>
</feature>
<feature type="modified residue" description="Phosphoserine" evidence="1">
    <location>
        <position position="428"/>
    </location>
</feature>
<evidence type="ECO:0000269" key="1">
    <source>
    </source>
</evidence>
<evidence type="ECO:0000305" key="2"/>